<sequence length="453" mass="51881">TRLDGFICSKCGETFTVNSHLLTHLCGKHERIYSREKLYSCTECRRTFTTDTELQSHQMIYMERDPFTCTECGKSFSERDNLKCHHKTHTGEKPFTCMECGKGFSVKSSLKHHYKAHITEKAVRCTECGKEFTSKYYLNVHKRLHTGEKPFTCTQCGKCFSDKSALKYHHKTHTGEKPFACTECGKSFTEKSILQKHQRTHTGEKPFTCTECGKSYSAMSTLECHRRTHTGEKPFTCTECGKSFTEKSILRKHHKTHTGEKPFTCTECGKSCTEKSILRKHQITHTGEKPFTCTECGKCFSDKTALKYHHKTHTGEKPFACTECGKSFTDKSILRNHQRTHTGEKPFTCTECGKSYSAMSTLKSDRRTHTGEKPFTCTECGKSFTEKSILRKHHKTHTGEKPFTCTECGKSFTHKSILQKHQRTHTGEKPFTCTECGKCFSDKTAIKYHRITH</sequence>
<reference key="1">
    <citation type="journal article" date="1989" name="J. Mol. Biol.">
        <title>Second-order repeats in Xenopus laevis finger proteins.</title>
        <authorList>
            <person name="Nietfeld W."/>
            <person name="El-Baradi T."/>
            <person name="Mentzel H."/>
            <person name="Pieler T."/>
            <person name="Koester M."/>
            <person name="Poeting A."/>
            <person name="Knoechel W."/>
        </authorList>
    </citation>
    <scope>NUCLEOTIDE SEQUENCE</scope>
</reference>
<evidence type="ECO:0000255" key="1">
    <source>
        <dbReference type="PROSITE-ProRule" id="PRU00042"/>
    </source>
</evidence>
<evidence type="ECO:0000305" key="2"/>
<dbReference type="SMR" id="P18749"/>
<dbReference type="Proteomes" id="UP000186698">
    <property type="component" value="Unplaced"/>
</dbReference>
<dbReference type="GO" id="GO:0005634">
    <property type="term" value="C:nucleus"/>
    <property type="evidence" value="ECO:0007669"/>
    <property type="project" value="UniProtKB-SubCell"/>
</dbReference>
<dbReference type="GO" id="GO:0000981">
    <property type="term" value="F:DNA-binding transcription factor activity, RNA polymerase II-specific"/>
    <property type="evidence" value="ECO:0000318"/>
    <property type="project" value="GO_Central"/>
</dbReference>
<dbReference type="GO" id="GO:0000978">
    <property type="term" value="F:RNA polymerase II cis-regulatory region sequence-specific DNA binding"/>
    <property type="evidence" value="ECO:0000318"/>
    <property type="project" value="GO_Central"/>
</dbReference>
<dbReference type="GO" id="GO:0008270">
    <property type="term" value="F:zinc ion binding"/>
    <property type="evidence" value="ECO:0007669"/>
    <property type="project" value="UniProtKB-KW"/>
</dbReference>
<dbReference type="GO" id="GO:0006357">
    <property type="term" value="P:regulation of transcription by RNA polymerase II"/>
    <property type="evidence" value="ECO:0000318"/>
    <property type="project" value="GO_Central"/>
</dbReference>
<dbReference type="FunFam" id="3.30.160.60:FF:000100">
    <property type="entry name" value="Zinc finger 45-like"/>
    <property type="match status" value="1"/>
</dbReference>
<dbReference type="FunFam" id="3.30.160.60:FF:000097">
    <property type="entry name" value="Zinc finger protein"/>
    <property type="match status" value="1"/>
</dbReference>
<dbReference type="FunFam" id="3.30.160.60:FF:000446">
    <property type="entry name" value="Zinc finger protein"/>
    <property type="match status" value="1"/>
</dbReference>
<dbReference type="FunFam" id="3.30.160.60:FF:000706">
    <property type="entry name" value="Zinc finger protein"/>
    <property type="match status" value="1"/>
</dbReference>
<dbReference type="FunFam" id="3.30.160.60:FF:000759">
    <property type="entry name" value="zinc finger protein 16"/>
    <property type="match status" value="4"/>
</dbReference>
<dbReference type="FunFam" id="3.30.160.60:FF:002343">
    <property type="entry name" value="Zinc finger protein 33A"/>
    <property type="match status" value="5"/>
</dbReference>
<dbReference type="FunFam" id="3.30.160.60:FF:001156">
    <property type="entry name" value="Zinc finger protein 407"/>
    <property type="match status" value="1"/>
</dbReference>
<dbReference type="FunFam" id="3.30.160.60:FF:002274">
    <property type="entry name" value="Zinc finger protein 432"/>
    <property type="match status" value="1"/>
</dbReference>
<dbReference type="Gene3D" id="3.30.160.60">
    <property type="entry name" value="Classic Zinc Finger"/>
    <property type="match status" value="15"/>
</dbReference>
<dbReference type="InterPro" id="IPR036236">
    <property type="entry name" value="Znf_C2H2_sf"/>
</dbReference>
<dbReference type="InterPro" id="IPR013087">
    <property type="entry name" value="Znf_C2H2_type"/>
</dbReference>
<dbReference type="PANTHER" id="PTHR24381">
    <property type="entry name" value="ZINC FINGER PROTEIN"/>
    <property type="match status" value="1"/>
</dbReference>
<dbReference type="PANTHER" id="PTHR24381:SF436">
    <property type="entry name" value="ZINC FINGER PROTEIN 768"/>
    <property type="match status" value="1"/>
</dbReference>
<dbReference type="Pfam" id="PF00096">
    <property type="entry name" value="zf-C2H2"/>
    <property type="match status" value="14"/>
</dbReference>
<dbReference type="SMART" id="SM00355">
    <property type="entry name" value="ZnF_C2H2"/>
    <property type="match status" value="16"/>
</dbReference>
<dbReference type="SUPFAM" id="SSF57667">
    <property type="entry name" value="beta-beta-alpha zinc fingers"/>
    <property type="match status" value="9"/>
</dbReference>
<dbReference type="PROSITE" id="PS00028">
    <property type="entry name" value="ZINC_FINGER_C2H2_1"/>
    <property type="match status" value="14"/>
</dbReference>
<dbReference type="PROSITE" id="PS50157">
    <property type="entry name" value="ZINC_FINGER_C2H2_2"/>
    <property type="match status" value="16"/>
</dbReference>
<protein>
    <recommendedName>
        <fullName>Oocyte zinc finger protein XlCOF6</fullName>
    </recommendedName>
</protein>
<feature type="chain" id="PRO_0000047809" description="Oocyte zinc finger protein XlCOF6">
    <location>
        <begin position="1" status="less than"/>
        <end position="453" status="greater than"/>
    </location>
</feature>
<feature type="zinc finger region" description="C2H2-type 1" evidence="1">
    <location>
        <begin position="6"/>
        <end position="29"/>
    </location>
</feature>
<feature type="zinc finger region" description="C2H2-type 2" evidence="1">
    <location>
        <begin position="67"/>
        <end position="89"/>
    </location>
</feature>
<feature type="zinc finger region" description="C2H2-type 3" evidence="1">
    <location>
        <begin position="95"/>
        <end position="117"/>
    </location>
</feature>
<feature type="zinc finger region" description="C2H2-type 4" evidence="1">
    <location>
        <begin position="123"/>
        <end position="145"/>
    </location>
</feature>
<feature type="zinc finger region" description="C2H2-type 5" evidence="1">
    <location>
        <begin position="151"/>
        <end position="173"/>
    </location>
</feature>
<feature type="zinc finger region" description="C2H2-type 6" evidence="1">
    <location>
        <begin position="179"/>
        <end position="201"/>
    </location>
</feature>
<feature type="zinc finger region" description="C2H2-type 7" evidence="1">
    <location>
        <begin position="207"/>
        <end position="229"/>
    </location>
</feature>
<feature type="zinc finger region" description="C2H2-type 8" evidence="1">
    <location>
        <begin position="235"/>
        <end position="257"/>
    </location>
</feature>
<feature type="zinc finger region" description="C2H2-type 9" evidence="1">
    <location>
        <begin position="263"/>
        <end position="285"/>
    </location>
</feature>
<feature type="zinc finger region" description="C2H2-type 10" evidence="1">
    <location>
        <begin position="291"/>
        <end position="313"/>
    </location>
</feature>
<feature type="zinc finger region" description="C2H2-type 11" evidence="1">
    <location>
        <begin position="319"/>
        <end position="341"/>
    </location>
</feature>
<feature type="zinc finger region" description="C2H2-type 12" evidence="1">
    <location>
        <begin position="375"/>
        <end position="397"/>
    </location>
</feature>
<feature type="zinc finger region" description="C2H2-type 13" evidence="1">
    <location>
        <begin position="403"/>
        <end position="425"/>
    </location>
</feature>
<feature type="zinc finger region" description="C2H2-type 14" evidence="1">
    <location>
        <begin position="431"/>
        <end position="453"/>
    </location>
</feature>
<feature type="non-terminal residue">
    <location>
        <position position="1"/>
    </location>
</feature>
<feature type="non-terminal residue">
    <location>
        <position position="453"/>
    </location>
</feature>
<name>ZO6_XENLA</name>
<proteinExistence type="inferred from homology"/>
<accession>P18749</accession>
<organism>
    <name type="scientific">Xenopus laevis</name>
    <name type="common">African clawed frog</name>
    <dbReference type="NCBI Taxonomy" id="8355"/>
    <lineage>
        <taxon>Eukaryota</taxon>
        <taxon>Metazoa</taxon>
        <taxon>Chordata</taxon>
        <taxon>Craniata</taxon>
        <taxon>Vertebrata</taxon>
        <taxon>Euteleostomi</taxon>
        <taxon>Amphibia</taxon>
        <taxon>Batrachia</taxon>
        <taxon>Anura</taxon>
        <taxon>Pipoidea</taxon>
        <taxon>Pipidae</taxon>
        <taxon>Xenopodinae</taxon>
        <taxon>Xenopus</taxon>
        <taxon>Xenopus</taxon>
    </lineage>
</organism>
<keyword id="KW-0238">DNA-binding</keyword>
<keyword id="KW-0479">Metal-binding</keyword>
<keyword id="KW-0539">Nucleus</keyword>
<keyword id="KW-1185">Reference proteome</keyword>
<keyword id="KW-0677">Repeat</keyword>
<keyword id="KW-0804">Transcription</keyword>
<keyword id="KW-0805">Transcription regulation</keyword>
<keyword id="KW-0862">Zinc</keyword>
<keyword id="KW-0863">Zinc-finger</keyword>
<comment type="function">
    <text>May be involved in transcriptional regulation.</text>
</comment>
<comment type="subcellular location">
    <subcellularLocation>
        <location evidence="2">Nucleus</location>
    </subcellularLocation>
</comment>
<comment type="similarity">
    <text evidence="2">Belongs to the krueppel C2H2-type zinc-finger protein family.</text>
</comment>